<dbReference type="EMBL" id="CU329672">
    <property type="protein sequence ID" value="CAA19110.1"/>
    <property type="molecule type" value="Genomic_DNA"/>
</dbReference>
<dbReference type="PIR" id="T41381">
    <property type="entry name" value="T41381"/>
</dbReference>
<dbReference type="RefSeq" id="NP_588098.1">
    <property type="nucleotide sequence ID" value="NM_001023089.2"/>
</dbReference>
<dbReference type="SMR" id="O59804"/>
<dbReference type="BioGRID" id="276052">
    <property type="interactions" value="2"/>
</dbReference>
<dbReference type="FunCoup" id="O59804">
    <property type="interactions" value="399"/>
</dbReference>
<dbReference type="STRING" id="284812.O59804"/>
<dbReference type="iPTMnet" id="O59804"/>
<dbReference type="PaxDb" id="4896-SPCC550.06c.1"/>
<dbReference type="EnsemblFungi" id="SPCC550.06c.1">
    <property type="protein sequence ID" value="SPCC550.06c.1:pep"/>
    <property type="gene ID" value="SPCC550.06c"/>
</dbReference>
<dbReference type="GeneID" id="2539489"/>
<dbReference type="KEGG" id="spo:2539489"/>
<dbReference type="PomBase" id="SPCC550.06c">
    <property type="gene designation" value="hsp10"/>
</dbReference>
<dbReference type="VEuPathDB" id="FungiDB:SPCC550.06c"/>
<dbReference type="eggNOG" id="KOG1641">
    <property type="taxonomic scope" value="Eukaryota"/>
</dbReference>
<dbReference type="HOGENOM" id="CLU_132825_0_0_1"/>
<dbReference type="InParanoid" id="O59804"/>
<dbReference type="OMA" id="EDFLIMR"/>
<dbReference type="PhylomeDB" id="O59804"/>
<dbReference type="PRO" id="PR:O59804"/>
<dbReference type="Proteomes" id="UP000002485">
    <property type="component" value="Chromosome III"/>
</dbReference>
<dbReference type="GO" id="GO:0005759">
    <property type="term" value="C:mitochondrial matrix"/>
    <property type="evidence" value="ECO:0000318"/>
    <property type="project" value="GO_Central"/>
</dbReference>
<dbReference type="GO" id="GO:0005739">
    <property type="term" value="C:mitochondrion"/>
    <property type="evidence" value="ECO:0007005"/>
    <property type="project" value="PomBase"/>
</dbReference>
<dbReference type="GO" id="GO:0005524">
    <property type="term" value="F:ATP binding"/>
    <property type="evidence" value="ECO:0007669"/>
    <property type="project" value="InterPro"/>
</dbReference>
<dbReference type="GO" id="GO:0046872">
    <property type="term" value="F:metal ion binding"/>
    <property type="evidence" value="ECO:0000318"/>
    <property type="project" value="GO_Central"/>
</dbReference>
<dbReference type="GO" id="GO:0044183">
    <property type="term" value="F:protein folding chaperone"/>
    <property type="evidence" value="ECO:0007669"/>
    <property type="project" value="InterPro"/>
</dbReference>
<dbReference type="GO" id="GO:0051087">
    <property type="term" value="F:protein-folding chaperone binding"/>
    <property type="evidence" value="ECO:0000318"/>
    <property type="project" value="GO_Central"/>
</dbReference>
<dbReference type="GO" id="GO:0051082">
    <property type="term" value="F:unfolded protein binding"/>
    <property type="evidence" value="ECO:0000318"/>
    <property type="project" value="GO_Central"/>
</dbReference>
<dbReference type="GO" id="GO:0051085">
    <property type="term" value="P:chaperone cofactor-dependent protein refolding"/>
    <property type="evidence" value="ECO:0000318"/>
    <property type="project" value="GO_Central"/>
</dbReference>
<dbReference type="GO" id="GO:0006457">
    <property type="term" value="P:protein folding"/>
    <property type="evidence" value="ECO:0000250"/>
    <property type="project" value="PomBase"/>
</dbReference>
<dbReference type="GO" id="GO:0030150">
    <property type="term" value="P:protein import into mitochondrial matrix"/>
    <property type="evidence" value="ECO:0000250"/>
    <property type="project" value="PomBase"/>
</dbReference>
<dbReference type="CDD" id="cd00320">
    <property type="entry name" value="cpn10"/>
    <property type="match status" value="1"/>
</dbReference>
<dbReference type="FunFam" id="2.30.33.40:FF:000002">
    <property type="entry name" value="10 kDa chaperonin, mitochondrial"/>
    <property type="match status" value="1"/>
</dbReference>
<dbReference type="Gene3D" id="2.30.33.40">
    <property type="entry name" value="GroES chaperonin"/>
    <property type="match status" value="1"/>
</dbReference>
<dbReference type="HAMAP" id="MF_00580">
    <property type="entry name" value="CH10"/>
    <property type="match status" value="1"/>
</dbReference>
<dbReference type="InterPro" id="IPR020818">
    <property type="entry name" value="Chaperonin_GroES"/>
</dbReference>
<dbReference type="InterPro" id="IPR037124">
    <property type="entry name" value="Chaperonin_GroES_sf"/>
</dbReference>
<dbReference type="InterPro" id="IPR018369">
    <property type="entry name" value="Chaprnonin_Cpn10_CS"/>
</dbReference>
<dbReference type="InterPro" id="IPR011032">
    <property type="entry name" value="GroES-like_sf"/>
</dbReference>
<dbReference type="PANTHER" id="PTHR10772">
    <property type="entry name" value="10 KDA HEAT SHOCK PROTEIN"/>
    <property type="match status" value="1"/>
</dbReference>
<dbReference type="PANTHER" id="PTHR10772:SF0">
    <property type="entry name" value="10 KDA HEAT SHOCK PROTEIN, MITOCHONDRIAL"/>
    <property type="match status" value="1"/>
</dbReference>
<dbReference type="Pfam" id="PF00166">
    <property type="entry name" value="Cpn10"/>
    <property type="match status" value="1"/>
</dbReference>
<dbReference type="PRINTS" id="PR00297">
    <property type="entry name" value="CHAPERONIN10"/>
</dbReference>
<dbReference type="SMART" id="SM00883">
    <property type="entry name" value="Cpn10"/>
    <property type="match status" value="1"/>
</dbReference>
<dbReference type="SUPFAM" id="SSF50129">
    <property type="entry name" value="GroES-like"/>
    <property type="match status" value="1"/>
</dbReference>
<dbReference type="PROSITE" id="PS00681">
    <property type="entry name" value="CHAPERONINS_CPN10"/>
    <property type="match status" value="1"/>
</dbReference>
<sequence>MATKLKSAKSIVPLLDRILVQRIKADTKTASGIFLPEKSVEKLSEGRVISVGKGGYNKEGKLAQPSVAVGDRVLLPAYGGSNIKVGEEEYSLYRDHELLAIIKE</sequence>
<gene>
    <name type="primary">hsp10</name>
    <name type="ORF">SPCC550.06c</name>
</gene>
<feature type="chain" id="PRO_0000174921" description="10 kDa heat shock protein, mitochondrial">
    <location>
        <begin position="1"/>
        <end position="104"/>
    </location>
</feature>
<feature type="modified residue" description="Phosphoserine" evidence="2">
    <location>
        <position position="81"/>
    </location>
</feature>
<accession>O59804</accession>
<protein>
    <recommendedName>
        <fullName>10 kDa heat shock protein, mitochondrial</fullName>
        <shortName>HSP10</shortName>
    </recommendedName>
    <alternativeName>
        <fullName>10 kDa chaperonin</fullName>
    </alternativeName>
</protein>
<proteinExistence type="evidence at protein level"/>
<evidence type="ECO:0000250" key="1"/>
<evidence type="ECO:0000269" key="2">
    <source>
    </source>
</evidence>
<evidence type="ECO:0000305" key="3"/>
<reference key="1">
    <citation type="journal article" date="2002" name="Nature">
        <title>The genome sequence of Schizosaccharomyces pombe.</title>
        <authorList>
            <person name="Wood V."/>
            <person name="Gwilliam R."/>
            <person name="Rajandream M.A."/>
            <person name="Lyne M.H."/>
            <person name="Lyne R."/>
            <person name="Stewart A."/>
            <person name="Sgouros J.G."/>
            <person name="Peat N."/>
            <person name="Hayles J."/>
            <person name="Baker S.G."/>
            <person name="Basham D."/>
            <person name="Bowman S."/>
            <person name="Brooks K."/>
            <person name="Brown D."/>
            <person name="Brown S."/>
            <person name="Chillingworth T."/>
            <person name="Churcher C.M."/>
            <person name="Collins M."/>
            <person name="Connor R."/>
            <person name="Cronin A."/>
            <person name="Davis P."/>
            <person name="Feltwell T."/>
            <person name="Fraser A."/>
            <person name="Gentles S."/>
            <person name="Goble A."/>
            <person name="Hamlin N."/>
            <person name="Harris D.E."/>
            <person name="Hidalgo J."/>
            <person name="Hodgson G."/>
            <person name="Holroyd S."/>
            <person name="Hornsby T."/>
            <person name="Howarth S."/>
            <person name="Huckle E.J."/>
            <person name="Hunt S."/>
            <person name="Jagels K."/>
            <person name="James K.D."/>
            <person name="Jones L."/>
            <person name="Jones M."/>
            <person name="Leather S."/>
            <person name="McDonald S."/>
            <person name="McLean J."/>
            <person name="Mooney P."/>
            <person name="Moule S."/>
            <person name="Mungall K.L."/>
            <person name="Murphy L.D."/>
            <person name="Niblett D."/>
            <person name="Odell C."/>
            <person name="Oliver K."/>
            <person name="O'Neil S."/>
            <person name="Pearson D."/>
            <person name="Quail M.A."/>
            <person name="Rabbinowitsch E."/>
            <person name="Rutherford K.M."/>
            <person name="Rutter S."/>
            <person name="Saunders D."/>
            <person name="Seeger K."/>
            <person name="Sharp S."/>
            <person name="Skelton J."/>
            <person name="Simmonds M.N."/>
            <person name="Squares R."/>
            <person name="Squares S."/>
            <person name="Stevens K."/>
            <person name="Taylor K."/>
            <person name="Taylor R.G."/>
            <person name="Tivey A."/>
            <person name="Walsh S.V."/>
            <person name="Warren T."/>
            <person name="Whitehead S."/>
            <person name="Woodward J.R."/>
            <person name="Volckaert G."/>
            <person name="Aert R."/>
            <person name="Robben J."/>
            <person name="Grymonprez B."/>
            <person name="Weltjens I."/>
            <person name="Vanstreels E."/>
            <person name="Rieger M."/>
            <person name="Schaefer M."/>
            <person name="Mueller-Auer S."/>
            <person name="Gabel C."/>
            <person name="Fuchs M."/>
            <person name="Duesterhoeft A."/>
            <person name="Fritzc C."/>
            <person name="Holzer E."/>
            <person name="Moestl D."/>
            <person name="Hilbert H."/>
            <person name="Borzym K."/>
            <person name="Langer I."/>
            <person name="Beck A."/>
            <person name="Lehrach H."/>
            <person name="Reinhardt R."/>
            <person name="Pohl T.M."/>
            <person name="Eger P."/>
            <person name="Zimmermann W."/>
            <person name="Wedler H."/>
            <person name="Wambutt R."/>
            <person name="Purnelle B."/>
            <person name="Goffeau A."/>
            <person name="Cadieu E."/>
            <person name="Dreano S."/>
            <person name="Gloux S."/>
            <person name="Lelaure V."/>
            <person name="Mottier S."/>
            <person name="Galibert F."/>
            <person name="Aves S.J."/>
            <person name="Xiang Z."/>
            <person name="Hunt C."/>
            <person name="Moore K."/>
            <person name="Hurst S.M."/>
            <person name="Lucas M."/>
            <person name="Rochet M."/>
            <person name="Gaillardin C."/>
            <person name="Tallada V.A."/>
            <person name="Garzon A."/>
            <person name="Thode G."/>
            <person name="Daga R.R."/>
            <person name="Cruzado L."/>
            <person name="Jimenez J."/>
            <person name="Sanchez M."/>
            <person name="del Rey F."/>
            <person name="Benito J."/>
            <person name="Dominguez A."/>
            <person name="Revuelta J.L."/>
            <person name="Moreno S."/>
            <person name="Armstrong J."/>
            <person name="Forsburg S.L."/>
            <person name="Cerutti L."/>
            <person name="Lowe T."/>
            <person name="McCombie W.R."/>
            <person name="Paulsen I."/>
            <person name="Potashkin J."/>
            <person name="Shpakovski G.V."/>
            <person name="Ussery D."/>
            <person name="Barrell B.G."/>
            <person name="Nurse P."/>
        </authorList>
    </citation>
    <scope>NUCLEOTIDE SEQUENCE [LARGE SCALE GENOMIC DNA]</scope>
    <source>
        <strain>972 / ATCC 24843</strain>
    </source>
</reference>
<reference key="2">
    <citation type="journal article" date="2008" name="J. Proteome Res.">
        <title>Phosphoproteome analysis of fission yeast.</title>
        <authorList>
            <person name="Wilson-Grady J.T."/>
            <person name="Villen J."/>
            <person name="Gygi S.P."/>
        </authorList>
    </citation>
    <scope>PHOSPHORYLATION [LARGE SCALE ANALYSIS] AT SER-81</scope>
    <scope>IDENTIFICATION BY MASS SPECTROMETRY</scope>
</reference>
<name>CH10_SCHPO</name>
<comment type="function">
    <text evidence="1">Eukaryotic CPN10 homolog which is essential for mitochondrial protein biogenesis, together with CPN60. Binds to CPN60 in the presence of Mg-ATP and suppresses the ATPase activity of the latter (By similarity).</text>
</comment>
<comment type="subunit">
    <text evidence="1">Homohexamer.</text>
</comment>
<comment type="subcellular location">
    <subcellularLocation>
        <location>Mitochondrion matrix</location>
    </subcellularLocation>
</comment>
<comment type="similarity">
    <text evidence="3">Belongs to the GroES chaperonin family.</text>
</comment>
<keyword id="KW-0143">Chaperone</keyword>
<keyword id="KW-0496">Mitochondrion</keyword>
<keyword id="KW-0597">Phosphoprotein</keyword>
<keyword id="KW-1185">Reference proteome</keyword>
<organism>
    <name type="scientific">Schizosaccharomyces pombe (strain 972 / ATCC 24843)</name>
    <name type="common">Fission yeast</name>
    <dbReference type="NCBI Taxonomy" id="284812"/>
    <lineage>
        <taxon>Eukaryota</taxon>
        <taxon>Fungi</taxon>
        <taxon>Dikarya</taxon>
        <taxon>Ascomycota</taxon>
        <taxon>Taphrinomycotina</taxon>
        <taxon>Schizosaccharomycetes</taxon>
        <taxon>Schizosaccharomycetales</taxon>
        <taxon>Schizosaccharomycetaceae</taxon>
        <taxon>Schizosaccharomyces</taxon>
    </lineage>
</organism>